<name>MDV1_NEOFI</name>
<proteinExistence type="inferred from homology"/>
<organism>
    <name type="scientific">Neosartorya fischeri (strain ATCC 1020 / DSM 3700 / CBS 544.65 / FGSC A1164 / JCM 1740 / NRRL 181 / WB 181)</name>
    <name type="common">Aspergillus fischerianus</name>
    <dbReference type="NCBI Taxonomy" id="331117"/>
    <lineage>
        <taxon>Eukaryota</taxon>
        <taxon>Fungi</taxon>
        <taxon>Dikarya</taxon>
        <taxon>Ascomycota</taxon>
        <taxon>Pezizomycotina</taxon>
        <taxon>Eurotiomycetes</taxon>
        <taxon>Eurotiomycetidae</taxon>
        <taxon>Eurotiales</taxon>
        <taxon>Aspergillaceae</taxon>
        <taxon>Aspergillus</taxon>
        <taxon>Aspergillus subgen. Fumigati</taxon>
    </lineage>
</organism>
<evidence type="ECO:0000250" key="1"/>
<evidence type="ECO:0000255" key="2"/>
<evidence type="ECO:0000256" key="3">
    <source>
        <dbReference type="SAM" id="MobiDB-lite"/>
    </source>
</evidence>
<evidence type="ECO:0000305" key="4"/>
<protein>
    <recommendedName>
        <fullName>Mitochondrial division protein 1</fullName>
    </recommendedName>
</protein>
<keyword id="KW-0175">Coiled coil</keyword>
<keyword id="KW-0472">Membrane</keyword>
<keyword id="KW-0496">Mitochondrion</keyword>
<keyword id="KW-1000">Mitochondrion outer membrane</keyword>
<keyword id="KW-1185">Reference proteome</keyword>
<keyword id="KW-0677">Repeat</keyword>
<keyword id="KW-0853">WD repeat</keyword>
<sequence>MATQRRDESPSGLSDIVEPDGLLGIGLTSRHIEAFGRKVTSTAGHLMGPITDSSNGGHYHTAMADIHRELRRPTTQRKVFSLTQTTPTDLVRSKLSTSEIQSRALSSLPDELLANIPEDSSSYSLFEGFKATQDDHEFRKAHRRRSSKGKKLLKDGEAAGALPSAPTDLKKERDLLSRRLDLMGVRKNMCSSEIHEIDNKIANLHNMRKIVLDRLAGLEMEEAELEHQLTEIDNKLEDIQEEAPKTPVTAATPKSSAVNDDSFVSEDAAMDASFMSESIYQKLPSHSPRSLKQRSIRKRSMPILHEHFAPGSQIKEMQAHTDMVTAIDFDYPFGTMVSAALDDTVRVWDLNIGRCTGFLEGHNASVRCLQVEDNIVATGSMDASVKLWDLSRARTVTRDNRLNKHEEGEGEDDNASDAFSLFSATTLEDCYVFSLDAHVDEVTALHFRGNTLISGSADKTLRQWDLVKGRCVQTLDVLWAAAQASTLAADTQWRPSGRLPDASADFVGALQCFDAALACGTADGMVRLWDLRSGQVHRSLVGHTGPITCLQFDEVHLVTGSQDRSIRIWDLRMGSIFDAYAYDKPITSMMFDTKRIVAAAGENVVKVYDKADGHHWDCGAGVGADESGPAPATVERVRLKDGYLLEGRKDGTVAAWTC</sequence>
<comment type="function">
    <text evidence="1">Involved in mitochondrial fission. Acts as an adapter protein required to form mitochondrial fission complexes. Formation of these complexes is required to promote constriction and fission of the mitochondrial compartment at a late step in mitochondrial division (By similarity).</text>
</comment>
<comment type="subcellular location">
    <subcellularLocation>
        <location evidence="1">Mitochondrion outer membrane</location>
        <topology evidence="1">Peripheral membrane protein</topology>
        <orientation evidence="1">Cytoplasmic side</orientation>
    </subcellularLocation>
</comment>
<comment type="similarity">
    <text evidence="4">Belongs to the WD repeat MDV1/CAF4 family.</text>
</comment>
<reference key="1">
    <citation type="journal article" date="2008" name="PLoS Genet.">
        <title>Genomic islands in the pathogenic filamentous fungus Aspergillus fumigatus.</title>
        <authorList>
            <person name="Fedorova N.D."/>
            <person name="Khaldi N."/>
            <person name="Joardar V.S."/>
            <person name="Maiti R."/>
            <person name="Amedeo P."/>
            <person name="Anderson M.J."/>
            <person name="Crabtree J."/>
            <person name="Silva J.C."/>
            <person name="Badger J.H."/>
            <person name="Albarraq A."/>
            <person name="Angiuoli S."/>
            <person name="Bussey H."/>
            <person name="Bowyer P."/>
            <person name="Cotty P.J."/>
            <person name="Dyer P.S."/>
            <person name="Egan A."/>
            <person name="Galens K."/>
            <person name="Fraser-Liggett C.M."/>
            <person name="Haas B.J."/>
            <person name="Inman J.M."/>
            <person name="Kent R."/>
            <person name="Lemieux S."/>
            <person name="Malavazi I."/>
            <person name="Orvis J."/>
            <person name="Roemer T."/>
            <person name="Ronning C.M."/>
            <person name="Sundaram J.P."/>
            <person name="Sutton G."/>
            <person name="Turner G."/>
            <person name="Venter J.C."/>
            <person name="White O.R."/>
            <person name="Whitty B.R."/>
            <person name="Youngman P."/>
            <person name="Wolfe K.H."/>
            <person name="Goldman G.H."/>
            <person name="Wortman J.R."/>
            <person name="Jiang B."/>
            <person name="Denning D.W."/>
            <person name="Nierman W.C."/>
        </authorList>
    </citation>
    <scope>NUCLEOTIDE SEQUENCE [LARGE SCALE GENOMIC DNA]</scope>
    <source>
        <strain>ATCC 1020 / DSM 3700 / CBS 544.65 / FGSC A1164 / JCM 1740 / NRRL 181 / WB 181</strain>
    </source>
</reference>
<dbReference type="EMBL" id="DS027696">
    <property type="protein sequence ID" value="EAW17473.1"/>
    <property type="molecule type" value="Genomic_DNA"/>
</dbReference>
<dbReference type="RefSeq" id="XP_001259370.1">
    <property type="nucleotide sequence ID" value="XM_001259369.1"/>
</dbReference>
<dbReference type="SMR" id="A1DDL6"/>
<dbReference type="STRING" id="331117.A1DDL6"/>
<dbReference type="EnsemblFungi" id="EAW17473">
    <property type="protein sequence ID" value="EAW17473"/>
    <property type="gene ID" value="NFIA_073890"/>
</dbReference>
<dbReference type="GeneID" id="4586026"/>
<dbReference type="KEGG" id="nfi:NFIA_073890"/>
<dbReference type="VEuPathDB" id="FungiDB:NFIA_073890"/>
<dbReference type="eggNOG" id="KOG4155">
    <property type="taxonomic scope" value="Eukaryota"/>
</dbReference>
<dbReference type="HOGENOM" id="CLU_012350_1_1_1"/>
<dbReference type="OMA" id="ERLRYMD"/>
<dbReference type="OrthoDB" id="496at2759"/>
<dbReference type="Proteomes" id="UP000006702">
    <property type="component" value="Unassembled WGS sequence"/>
</dbReference>
<dbReference type="GO" id="GO:0005741">
    <property type="term" value="C:mitochondrial outer membrane"/>
    <property type="evidence" value="ECO:0007669"/>
    <property type="project" value="UniProtKB-SubCell"/>
</dbReference>
<dbReference type="GO" id="GO:1990234">
    <property type="term" value="C:transferase complex"/>
    <property type="evidence" value="ECO:0007669"/>
    <property type="project" value="UniProtKB-ARBA"/>
</dbReference>
<dbReference type="CDD" id="cd22881">
    <property type="entry name" value="Mdv1_N"/>
    <property type="match status" value="1"/>
</dbReference>
<dbReference type="CDD" id="cd00200">
    <property type="entry name" value="WD40"/>
    <property type="match status" value="1"/>
</dbReference>
<dbReference type="FunFam" id="2.130.10.10:FF:000404">
    <property type="entry name" value="Mitochondrial division protein 1"/>
    <property type="match status" value="1"/>
</dbReference>
<dbReference type="FunFam" id="2.130.10.10:FF:000881">
    <property type="entry name" value="Mitochondrial division protein 1"/>
    <property type="match status" value="1"/>
</dbReference>
<dbReference type="Gene3D" id="6.10.280.220">
    <property type="match status" value="1"/>
</dbReference>
<dbReference type="Gene3D" id="2.130.10.10">
    <property type="entry name" value="YVTN repeat-like/Quinoprotein amine dehydrogenase"/>
    <property type="match status" value="2"/>
</dbReference>
<dbReference type="InterPro" id="IPR020472">
    <property type="entry name" value="G-protein_beta_WD-40_rep"/>
</dbReference>
<dbReference type="InterPro" id="IPR015943">
    <property type="entry name" value="WD40/YVTN_repeat-like_dom_sf"/>
</dbReference>
<dbReference type="InterPro" id="IPR019775">
    <property type="entry name" value="WD40_repeat_CS"/>
</dbReference>
<dbReference type="InterPro" id="IPR036322">
    <property type="entry name" value="WD40_repeat_dom_sf"/>
</dbReference>
<dbReference type="InterPro" id="IPR001680">
    <property type="entry name" value="WD40_rpt"/>
</dbReference>
<dbReference type="PANTHER" id="PTHR22847:SF637">
    <property type="entry name" value="WD REPEAT DOMAIN 5B"/>
    <property type="match status" value="1"/>
</dbReference>
<dbReference type="PANTHER" id="PTHR22847">
    <property type="entry name" value="WD40 REPEAT PROTEIN"/>
    <property type="match status" value="1"/>
</dbReference>
<dbReference type="Pfam" id="PF00400">
    <property type="entry name" value="WD40"/>
    <property type="match status" value="4"/>
</dbReference>
<dbReference type="PRINTS" id="PR00320">
    <property type="entry name" value="GPROTEINBRPT"/>
</dbReference>
<dbReference type="SMART" id="SM00320">
    <property type="entry name" value="WD40"/>
    <property type="match status" value="6"/>
</dbReference>
<dbReference type="SUPFAM" id="SSF50978">
    <property type="entry name" value="WD40 repeat-like"/>
    <property type="match status" value="1"/>
</dbReference>
<dbReference type="PROSITE" id="PS00678">
    <property type="entry name" value="WD_REPEATS_1"/>
    <property type="match status" value="3"/>
</dbReference>
<dbReference type="PROSITE" id="PS50082">
    <property type="entry name" value="WD_REPEATS_2"/>
    <property type="match status" value="5"/>
</dbReference>
<dbReference type="PROSITE" id="PS50294">
    <property type="entry name" value="WD_REPEATS_REGION"/>
    <property type="match status" value="1"/>
</dbReference>
<gene>
    <name type="primary">mdv1</name>
    <name type="ORF">NFIA_073890</name>
</gene>
<feature type="chain" id="PRO_0000330108" description="Mitochondrial division protein 1">
    <location>
        <begin position="1"/>
        <end position="658"/>
    </location>
</feature>
<feature type="repeat" description="WD 1">
    <location>
        <begin position="319"/>
        <end position="360"/>
    </location>
</feature>
<feature type="repeat" description="WD 2">
    <location>
        <begin position="361"/>
        <end position="398"/>
    </location>
</feature>
<feature type="repeat" description="WD 3">
    <location>
        <begin position="437"/>
        <end position="476"/>
    </location>
</feature>
<feature type="repeat" description="WD 4">
    <location>
        <begin position="482"/>
        <end position="539"/>
    </location>
</feature>
<feature type="repeat" description="WD 5">
    <location>
        <begin position="542"/>
        <end position="581"/>
    </location>
</feature>
<feature type="repeat" description="WD 6">
    <location>
        <begin position="583"/>
        <end position="618"/>
    </location>
</feature>
<feature type="repeat" description="WD 7">
    <location>
        <begin position="629"/>
        <end position="658"/>
    </location>
</feature>
<feature type="region of interest" description="Disordered" evidence="3">
    <location>
        <begin position="138"/>
        <end position="170"/>
    </location>
</feature>
<feature type="coiled-coil region" evidence="2">
    <location>
        <begin position="209"/>
        <end position="246"/>
    </location>
</feature>
<feature type="compositionally biased region" description="Basic residues" evidence="3">
    <location>
        <begin position="139"/>
        <end position="151"/>
    </location>
</feature>
<accession>A1DDL6</accession>